<reference key="1">
    <citation type="journal article" date="2007" name="Genome Res.">
        <title>Genome sequence of a proteolytic (Group I) Clostridium botulinum strain Hall A and comparative analysis of the clostridial genomes.</title>
        <authorList>
            <person name="Sebaihia M."/>
            <person name="Peck M.W."/>
            <person name="Minton N.P."/>
            <person name="Thomson N.R."/>
            <person name="Holden M.T.G."/>
            <person name="Mitchell W.J."/>
            <person name="Carter A.T."/>
            <person name="Bentley S.D."/>
            <person name="Mason D.R."/>
            <person name="Crossman L."/>
            <person name="Paul C.J."/>
            <person name="Ivens A."/>
            <person name="Wells-Bennik M.H.J."/>
            <person name="Davis I.J."/>
            <person name="Cerdeno-Tarraga A.M."/>
            <person name="Churcher C."/>
            <person name="Quail M.A."/>
            <person name="Chillingworth T."/>
            <person name="Feltwell T."/>
            <person name="Fraser A."/>
            <person name="Goodhead I."/>
            <person name="Hance Z."/>
            <person name="Jagels K."/>
            <person name="Larke N."/>
            <person name="Maddison M."/>
            <person name="Moule S."/>
            <person name="Mungall K."/>
            <person name="Norbertczak H."/>
            <person name="Rabbinowitsch E."/>
            <person name="Sanders M."/>
            <person name="Simmonds M."/>
            <person name="White B."/>
            <person name="Whithead S."/>
            <person name="Parkhill J."/>
        </authorList>
    </citation>
    <scope>NUCLEOTIDE SEQUENCE [LARGE SCALE GENOMIC DNA]</scope>
    <source>
        <strain>Hall / ATCC 3502 / NCTC 13319 / Type A</strain>
    </source>
</reference>
<reference key="2">
    <citation type="journal article" date="2007" name="PLoS ONE">
        <title>Analysis of the neurotoxin complex genes in Clostridium botulinum A1-A4 and B1 strains: BoNT/A3, /Ba4 and /B1 clusters are located within plasmids.</title>
        <authorList>
            <person name="Smith T.J."/>
            <person name="Hill K.K."/>
            <person name="Foley B.T."/>
            <person name="Detter J.C."/>
            <person name="Munk A.C."/>
            <person name="Bruce D.C."/>
            <person name="Doggett N.A."/>
            <person name="Smith L.A."/>
            <person name="Marks J.D."/>
            <person name="Xie G."/>
            <person name="Brettin T.S."/>
        </authorList>
    </citation>
    <scope>NUCLEOTIDE SEQUENCE [LARGE SCALE GENOMIC DNA]</scope>
    <source>
        <strain>Hall / ATCC 3502 / NCTC 13319 / Type A</strain>
    </source>
</reference>
<proteinExistence type="inferred from homology"/>
<feature type="chain" id="PRO_0000322487" description="V-type ATP synthase beta chain">
    <location>
        <begin position="1"/>
        <end position="461"/>
    </location>
</feature>
<dbReference type="EMBL" id="CP000727">
    <property type="protein sequence ID" value="ABS39017.1"/>
    <property type="molecule type" value="Genomic_DNA"/>
</dbReference>
<dbReference type="EMBL" id="AM412317">
    <property type="protein sequence ID" value="CAL84183.1"/>
    <property type="molecule type" value="Genomic_DNA"/>
</dbReference>
<dbReference type="RefSeq" id="WP_011986932.1">
    <property type="nucleotide sequence ID" value="NC_009698.1"/>
</dbReference>
<dbReference type="RefSeq" id="YP_001255121.1">
    <property type="nucleotide sequence ID" value="NC_009495.1"/>
</dbReference>
<dbReference type="RefSeq" id="YP_001388337.1">
    <property type="nucleotide sequence ID" value="NC_009698.1"/>
</dbReference>
<dbReference type="SMR" id="A5I556"/>
<dbReference type="GeneID" id="5187819"/>
<dbReference type="KEGG" id="cbh:CLC_2497"/>
<dbReference type="KEGG" id="cbo:CBO2624"/>
<dbReference type="PATRIC" id="fig|413999.7.peg.2606"/>
<dbReference type="HOGENOM" id="CLU_022916_0_0_9"/>
<dbReference type="PRO" id="PR:A5I556"/>
<dbReference type="Proteomes" id="UP000001986">
    <property type="component" value="Chromosome"/>
</dbReference>
<dbReference type="GO" id="GO:0005524">
    <property type="term" value="F:ATP binding"/>
    <property type="evidence" value="ECO:0007669"/>
    <property type="project" value="UniProtKB-UniRule"/>
</dbReference>
<dbReference type="GO" id="GO:0046933">
    <property type="term" value="F:proton-transporting ATP synthase activity, rotational mechanism"/>
    <property type="evidence" value="ECO:0007669"/>
    <property type="project" value="UniProtKB-UniRule"/>
</dbReference>
<dbReference type="GO" id="GO:0042777">
    <property type="term" value="P:proton motive force-driven plasma membrane ATP synthesis"/>
    <property type="evidence" value="ECO:0007669"/>
    <property type="project" value="UniProtKB-UniRule"/>
</dbReference>
<dbReference type="CDD" id="cd18112">
    <property type="entry name" value="ATP-synt_V_A-type_beta_C"/>
    <property type="match status" value="1"/>
</dbReference>
<dbReference type="CDD" id="cd18118">
    <property type="entry name" value="ATP-synt_V_A-type_beta_N"/>
    <property type="match status" value="1"/>
</dbReference>
<dbReference type="CDD" id="cd01135">
    <property type="entry name" value="V_A-ATPase_B"/>
    <property type="match status" value="1"/>
</dbReference>
<dbReference type="Gene3D" id="3.40.50.12240">
    <property type="match status" value="1"/>
</dbReference>
<dbReference type="HAMAP" id="MF_00310">
    <property type="entry name" value="ATP_synth_B_arch"/>
    <property type="match status" value="1"/>
</dbReference>
<dbReference type="InterPro" id="IPR055190">
    <property type="entry name" value="ATP-synt_VA_C"/>
</dbReference>
<dbReference type="InterPro" id="IPR020003">
    <property type="entry name" value="ATPase_a/bsu_AS"/>
</dbReference>
<dbReference type="InterPro" id="IPR004100">
    <property type="entry name" value="ATPase_F1/V1/A1_a/bsu_N"/>
</dbReference>
<dbReference type="InterPro" id="IPR000194">
    <property type="entry name" value="ATPase_F1/V1/A1_a/bsu_nucl-bd"/>
</dbReference>
<dbReference type="InterPro" id="IPR027417">
    <property type="entry name" value="P-loop_NTPase"/>
</dbReference>
<dbReference type="InterPro" id="IPR022879">
    <property type="entry name" value="V-ATPase_su_B/beta"/>
</dbReference>
<dbReference type="NCBIfam" id="NF003235">
    <property type="entry name" value="PRK04196.1"/>
    <property type="match status" value="1"/>
</dbReference>
<dbReference type="PANTHER" id="PTHR43389">
    <property type="entry name" value="V-TYPE PROTON ATPASE SUBUNIT B"/>
    <property type="match status" value="1"/>
</dbReference>
<dbReference type="PANTHER" id="PTHR43389:SF4">
    <property type="entry name" value="V-TYPE PROTON ATPASE SUBUNIT B"/>
    <property type="match status" value="1"/>
</dbReference>
<dbReference type="Pfam" id="PF00006">
    <property type="entry name" value="ATP-synt_ab"/>
    <property type="match status" value="1"/>
</dbReference>
<dbReference type="Pfam" id="PF02874">
    <property type="entry name" value="ATP-synt_ab_N"/>
    <property type="match status" value="1"/>
</dbReference>
<dbReference type="Pfam" id="PF22919">
    <property type="entry name" value="ATP-synt_VA_C"/>
    <property type="match status" value="1"/>
</dbReference>
<dbReference type="PIRSF" id="PIRSF039114">
    <property type="entry name" value="V-ATPsynth_beta/V-ATPase_B"/>
    <property type="match status" value="1"/>
</dbReference>
<dbReference type="SUPFAM" id="SSF47917">
    <property type="entry name" value="C-terminal domain of alpha and beta subunits of F1 ATP synthase"/>
    <property type="match status" value="1"/>
</dbReference>
<dbReference type="SUPFAM" id="SSF52540">
    <property type="entry name" value="P-loop containing nucleoside triphosphate hydrolases"/>
    <property type="match status" value="1"/>
</dbReference>
<dbReference type="PROSITE" id="PS00152">
    <property type="entry name" value="ATPASE_ALPHA_BETA"/>
    <property type="match status" value="1"/>
</dbReference>
<name>VATB_CLOBH</name>
<keyword id="KW-0066">ATP synthesis</keyword>
<keyword id="KW-0375">Hydrogen ion transport</keyword>
<keyword id="KW-0406">Ion transport</keyword>
<keyword id="KW-1185">Reference proteome</keyword>
<keyword id="KW-0813">Transport</keyword>
<protein>
    <recommendedName>
        <fullName evidence="1">V-type ATP synthase beta chain</fullName>
    </recommendedName>
    <alternativeName>
        <fullName evidence="1">V-ATPase subunit B</fullName>
    </alternativeName>
</protein>
<gene>
    <name evidence="1" type="primary">atpB</name>
    <name type="ordered locus">CBO2624</name>
    <name type="ordered locus">CLC_2497</name>
</gene>
<organism>
    <name type="scientific">Clostridium botulinum (strain Hall / ATCC 3502 / NCTC 13319 / Type A)</name>
    <dbReference type="NCBI Taxonomy" id="441771"/>
    <lineage>
        <taxon>Bacteria</taxon>
        <taxon>Bacillati</taxon>
        <taxon>Bacillota</taxon>
        <taxon>Clostridia</taxon>
        <taxon>Eubacteriales</taxon>
        <taxon>Clostridiaceae</taxon>
        <taxon>Clostridium</taxon>
    </lineage>
</organism>
<accession>A5I556</accession>
<accession>A7G6C2</accession>
<comment type="function">
    <text evidence="1">Produces ATP from ADP in the presence of a proton gradient across the membrane. The V-type beta chain is a regulatory subunit.</text>
</comment>
<comment type="similarity">
    <text evidence="1">Belongs to the ATPase alpha/beta chains family.</text>
</comment>
<sequence>MLKEYRTVKEVVGPLMLVDQVDGVSFDELVEIELHNGEKRRGKVLEINKDKAMVQLFEGSAGINLKGAKVKFLGKPLELGVSEDMLGRVFDGLGNPKDGGPKIIPDKKLDINGIPINPVARNYPDEFIQTGVSAIDGLNTLVRGQKLPVFSGSGLPHAELAAQIARQAKVLNSDSKFAVVFAAIGTTFEEAQYFIDDFTKTGAIDRAVLFINLANDPAIERIATPRMALTAAEYLAFEKGMHVLVIMTDITNYCEALREVSAARKEVPGRRGYPGYLYTDLSTLYERAGRILGKEGSITQIPILTMPEDDKTHPIPDLTGYITEGQIILSRELYKKGIMPPIDVLPSLSRLKDKGIGKGKTREDHADTMNQLFSAYAQGKQAKELSVILGESALSDTDKLYAKFADAFEEEYVSQGFTTNRTIEETLNLGWKLLTILPKSELKRIRDEYLEKYLNKAEESK</sequence>
<evidence type="ECO:0000255" key="1">
    <source>
        <dbReference type="HAMAP-Rule" id="MF_00310"/>
    </source>
</evidence>